<evidence type="ECO:0000255" key="1">
    <source>
        <dbReference type="PROSITE-ProRule" id="PRU00227"/>
    </source>
</evidence>
<evidence type="ECO:0000269" key="2">
    <source>
    </source>
</evidence>
<evidence type="ECO:0000305" key="3"/>
<organism>
    <name type="scientific">Aspergillus oryzae (strain ATCC 42149 / RIB 40)</name>
    <name type="common">Yellow koji mold</name>
    <dbReference type="NCBI Taxonomy" id="510516"/>
    <lineage>
        <taxon>Eukaryota</taxon>
        <taxon>Fungi</taxon>
        <taxon>Dikarya</taxon>
        <taxon>Ascomycota</taxon>
        <taxon>Pezizomycotina</taxon>
        <taxon>Eurotiomycetes</taxon>
        <taxon>Eurotiomycetidae</taxon>
        <taxon>Eurotiales</taxon>
        <taxon>Aspergillaceae</taxon>
        <taxon>Aspergillus</taxon>
        <taxon>Aspergillus subgen. Circumdati</taxon>
    </lineage>
</organism>
<gene>
    <name type="primary">prtT</name>
    <name type="synonym">prtR</name>
    <name type="ORF">AO090003001211/AO090003001212</name>
</gene>
<protein>
    <recommendedName>
        <fullName>Transcriptional activator of proteases prtT</fullName>
    </recommendedName>
    <alternativeName>
        <fullName>Zn(2)-C6 zinc finger-containing protein prtT</fullName>
    </alternativeName>
</protein>
<feature type="chain" id="PRO_0000407034" description="Transcriptional activator of proteases prtT">
    <location>
        <begin position="1"/>
        <end position="641"/>
    </location>
</feature>
<feature type="DNA-binding region" description="Zn(2)-C6 fungal-type" evidence="1">
    <location>
        <begin position="52"/>
        <end position="81"/>
    </location>
</feature>
<keyword id="KW-0238">DNA-binding</keyword>
<keyword id="KW-0479">Metal-binding</keyword>
<keyword id="KW-0539">Nucleus</keyword>
<keyword id="KW-1185">Reference proteome</keyword>
<keyword id="KW-0804">Transcription</keyword>
<keyword id="KW-0805">Transcription regulation</keyword>
<keyword id="KW-0862">Zinc</keyword>
<proteinExistence type="inferred from homology"/>
<reference key="1">
    <citation type="submission" date="2007-07" db="EMBL/GenBank/DDBJ databases">
        <title>A novel transcription activator, PrtR, involved in expression of major proteolytic genes in Aspergillus oryzae.</title>
        <authorList>
            <person name="Gomi K."/>
            <person name="Matsuura T."/>
        </authorList>
    </citation>
    <scope>NUCLEOTIDE SEQUENCE [GENOMIC DNA]</scope>
    <source>
        <strain>ATCC 42149 / RIB 40</strain>
    </source>
</reference>
<reference key="2">
    <citation type="journal article" date="2005" name="Nature">
        <title>Genome sequencing and analysis of Aspergillus oryzae.</title>
        <authorList>
            <person name="Machida M."/>
            <person name="Asai K."/>
            <person name="Sano M."/>
            <person name="Tanaka T."/>
            <person name="Kumagai T."/>
            <person name="Terai G."/>
            <person name="Kusumoto K."/>
            <person name="Arima T."/>
            <person name="Akita O."/>
            <person name="Kashiwagi Y."/>
            <person name="Abe K."/>
            <person name="Gomi K."/>
            <person name="Horiuchi H."/>
            <person name="Kitamoto K."/>
            <person name="Kobayashi T."/>
            <person name="Takeuchi M."/>
            <person name="Denning D.W."/>
            <person name="Galagan J.E."/>
            <person name="Nierman W.C."/>
            <person name="Yu J."/>
            <person name="Archer D.B."/>
            <person name="Bennett J.W."/>
            <person name="Bhatnagar D."/>
            <person name="Cleveland T.E."/>
            <person name="Fedorova N.D."/>
            <person name="Gotoh O."/>
            <person name="Horikawa H."/>
            <person name="Hosoyama A."/>
            <person name="Ichinomiya M."/>
            <person name="Igarashi R."/>
            <person name="Iwashita K."/>
            <person name="Juvvadi P.R."/>
            <person name="Kato M."/>
            <person name="Kato Y."/>
            <person name="Kin T."/>
            <person name="Kokubun A."/>
            <person name="Maeda H."/>
            <person name="Maeyama N."/>
            <person name="Maruyama J."/>
            <person name="Nagasaki H."/>
            <person name="Nakajima T."/>
            <person name="Oda K."/>
            <person name="Okada K."/>
            <person name="Paulsen I."/>
            <person name="Sakamoto K."/>
            <person name="Sawano T."/>
            <person name="Takahashi M."/>
            <person name="Takase K."/>
            <person name="Terabayashi Y."/>
            <person name="Wortman J.R."/>
            <person name="Yamada O."/>
            <person name="Yamagata Y."/>
            <person name="Anazawa H."/>
            <person name="Hata Y."/>
            <person name="Koide Y."/>
            <person name="Komori T."/>
            <person name="Koyama Y."/>
            <person name="Minetoki T."/>
            <person name="Suharnan S."/>
            <person name="Tanaka A."/>
            <person name="Isono K."/>
            <person name="Kuhara S."/>
            <person name="Ogasawara N."/>
            <person name="Kikuchi H."/>
        </authorList>
    </citation>
    <scope>NUCLEOTIDE SEQUENCE [LARGE SCALE GENOMIC DNA]</scope>
    <source>
        <strain>ATCC 42149 / RIB 40</strain>
    </source>
</reference>
<reference key="3">
    <citation type="journal article" date="2008" name="Fungal Genet. Biol.">
        <title>Characterization of the Aspergillus niger prtT, a unique regulator of extracellular protease encoding genes.</title>
        <authorList>
            <person name="Punt P.J."/>
            <person name="Schuren F.H."/>
            <person name="Lehmbeck J."/>
            <person name="Christensen T."/>
            <person name="Hjort C."/>
            <person name="van den Hondel C.A."/>
        </authorList>
    </citation>
    <scope>FUNCTION</scope>
</reference>
<sequence>MTRTTVEPIKYEAPSWEHKSVHVSDDHRRIIPNVGDDATRPKGRIRRSMTACNTCRKLKTRCDLDPRGHACRRCLSLRIDCQLPETSERFQDSTPMWSDATTAIPSIEERLTSLERSMREMTGMLRQILNQSPSVSNISVPPLARSVHTEETASIEGNSFGPFLPKPVRLIQDLQSEFFGETNRIPVESPFLGNSFEKGILDSKLSLKLVQLFVDNFGPLVSINNQSDFHNEMRNTDSLLYSTACLLASRYVPGIPPPIVHTMNLQVRHKAVNLLWEKPPLKYESLQALALLCLWPAAGQKEFPIDGWLLSGTAINHALVSFDFLNHVPSELLIDNDIAAQLRLWNAFCLTQLHFAVGNARPFHLPQRYLDYCPRLLEHPAATVEDGKVVAEIQLYLITLRLQANEQRMRFAEVEYEEIERWKVEWAHLLGKVKQRGPSRINANYSTAGDENSTFELSLWFCQILLHRTAMRFQAESERLTSEILQGSRLIISKFLQLRFVTALRVVDQAYFIVGYAALNLCDFNFLDPLIDQIQMFLLHLSPNEDHIAYRFSCMIAEFKRRCAECNDPCSAVDGSQCSFGDARKMSMEQVQFVPPLVDSMIGGYSALEQLIPEVMPHSFPESVISGMAVTEAIPVGSAPY</sequence>
<accession>A7BJS7</accession>
<accession>Q2UJH4</accession>
<accession>Q2UJH5</accession>
<comment type="function">
    <text evidence="2">Transcription factor required for protein utilization and degradation. Regulates transcription of major secreted proteases including a serine alkaline protease (alp1) and a metalloprotease (NpI).</text>
</comment>
<comment type="subcellular location">
    <subcellularLocation>
        <location evidence="1">Nucleus</location>
    </subcellularLocation>
</comment>
<comment type="similarity">
    <text evidence="3">Belongs to the prtT family.</text>
</comment>
<comment type="sequence caution" evidence="3">
    <conflict type="erroneous gene model prediction">
        <sequence resource="EMBL-CDS" id="BAE58290"/>
    </conflict>
    <text>The predicted genes AO090003001211 and AO090003001212 have been merged.</text>
</comment>
<comment type="sequence caution" evidence="3">
    <conflict type="erroneous gene model prediction">
        <sequence resource="EMBL-CDS" id="BAE58291"/>
    </conflict>
    <text>The predicted genes AO090003001211 and AO090003001212 have been merged.</text>
</comment>
<dbReference type="EMBL" id="AB333776">
    <property type="protein sequence ID" value="BAF74781.1"/>
    <property type="molecule type" value="Genomic_DNA"/>
</dbReference>
<dbReference type="EMBL" id="BA000050">
    <property type="protein sequence ID" value="BAE58290.1"/>
    <property type="status" value="ALT_SEQ"/>
    <property type="molecule type" value="Genomic_DNA"/>
</dbReference>
<dbReference type="EMBL" id="BA000050">
    <property type="protein sequence ID" value="BAE58291.1"/>
    <property type="status" value="ALT_SEQ"/>
    <property type="molecule type" value="Genomic_DNA"/>
</dbReference>
<dbReference type="STRING" id="510516.A7BJS7"/>
<dbReference type="Proteomes" id="UP000006564">
    <property type="component" value="Chromosome 2"/>
</dbReference>
<dbReference type="GO" id="GO:0005634">
    <property type="term" value="C:nucleus"/>
    <property type="evidence" value="ECO:0007669"/>
    <property type="project" value="UniProtKB-SubCell"/>
</dbReference>
<dbReference type="GO" id="GO:0000981">
    <property type="term" value="F:DNA-binding transcription factor activity, RNA polymerase II-specific"/>
    <property type="evidence" value="ECO:0007669"/>
    <property type="project" value="InterPro"/>
</dbReference>
<dbReference type="GO" id="GO:0000976">
    <property type="term" value="F:transcription cis-regulatory region binding"/>
    <property type="evidence" value="ECO:0007669"/>
    <property type="project" value="TreeGrafter"/>
</dbReference>
<dbReference type="GO" id="GO:0008270">
    <property type="term" value="F:zinc ion binding"/>
    <property type="evidence" value="ECO:0007669"/>
    <property type="project" value="InterPro"/>
</dbReference>
<dbReference type="GO" id="GO:0045893">
    <property type="term" value="P:positive regulation of DNA-templated transcription"/>
    <property type="evidence" value="ECO:0000315"/>
    <property type="project" value="UniProtKB"/>
</dbReference>
<dbReference type="GO" id="GO:0042176">
    <property type="term" value="P:regulation of protein catabolic process"/>
    <property type="evidence" value="ECO:0000315"/>
    <property type="project" value="UniProtKB"/>
</dbReference>
<dbReference type="CDD" id="cd12148">
    <property type="entry name" value="fungal_TF_MHR"/>
    <property type="match status" value="1"/>
</dbReference>
<dbReference type="CDD" id="cd00067">
    <property type="entry name" value="GAL4"/>
    <property type="match status" value="1"/>
</dbReference>
<dbReference type="FunFam" id="4.10.240.10:FF:000011">
    <property type="entry name" value="Transcriptional activator of proteases prtT"/>
    <property type="match status" value="1"/>
</dbReference>
<dbReference type="Gene3D" id="4.10.240.10">
    <property type="entry name" value="Zn(2)-C6 fungal-type DNA-binding domain"/>
    <property type="match status" value="1"/>
</dbReference>
<dbReference type="InterPro" id="IPR051089">
    <property type="entry name" value="prtT"/>
</dbReference>
<dbReference type="InterPro" id="IPR036864">
    <property type="entry name" value="Zn2-C6_fun-type_DNA-bd_sf"/>
</dbReference>
<dbReference type="InterPro" id="IPR001138">
    <property type="entry name" value="Zn2Cys6_DnaBD"/>
</dbReference>
<dbReference type="PANTHER" id="PTHR31845">
    <property type="entry name" value="FINGER DOMAIN PROTEIN, PUTATIVE-RELATED"/>
    <property type="match status" value="1"/>
</dbReference>
<dbReference type="PANTHER" id="PTHR31845:SF34">
    <property type="entry name" value="TRANSCRIPTIONAL ACTIVATOR OF PROTEASES PRTT"/>
    <property type="match status" value="1"/>
</dbReference>
<dbReference type="Pfam" id="PF00172">
    <property type="entry name" value="Zn_clus"/>
    <property type="match status" value="1"/>
</dbReference>
<dbReference type="SMART" id="SM00066">
    <property type="entry name" value="GAL4"/>
    <property type="match status" value="1"/>
</dbReference>
<dbReference type="SUPFAM" id="SSF57701">
    <property type="entry name" value="Zn2/Cys6 DNA-binding domain"/>
    <property type="match status" value="1"/>
</dbReference>
<dbReference type="PROSITE" id="PS00463">
    <property type="entry name" value="ZN2_CY6_FUNGAL_1"/>
    <property type="match status" value="1"/>
</dbReference>
<dbReference type="PROSITE" id="PS50048">
    <property type="entry name" value="ZN2_CY6_FUNGAL_2"/>
    <property type="match status" value="1"/>
</dbReference>
<name>PRTT_ASPOR</name>